<evidence type="ECO:0000255" key="1">
    <source>
        <dbReference type="HAMAP-Rule" id="MF_00352"/>
    </source>
</evidence>
<dbReference type="EC" id="1.3.7.7" evidence="1"/>
<dbReference type="EMBL" id="CP000096">
    <property type="protein sequence ID" value="ABB23103.1"/>
    <property type="molecule type" value="Genomic_DNA"/>
</dbReference>
<dbReference type="RefSeq" id="WP_011356978.1">
    <property type="nucleotide sequence ID" value="NC_007512.1"/>
</dbReference>
<dbReference type="SMR" id="Q3B6C8"/>
<dbReference type="STRING" id="319225.Plut_0215"/>
<dbReference type="KEGG" id="plt:Plut_0215"/>
<dbReference type="eggNOG" id="COG2710">
    <property type="taxonomic scope" value="Bacteria"/>
</dbReference>
<dbReference type="HOGENOM" id="CLU_037170_0_0_10"/>
<dbReference type="OrthoDB" id="5714774at2"/>
<dbReference type="UniPathway" id="UPA00671"/>
<dbReference type="Proteomes" id="UP000002709">
    <property type="component" value="Chromosome"/>
</dbReference>
<dbReference type="GO" id="GO:0051539">
    <property type="term" value="F:4 iron, 4 sulfur cluster binding"/>
    <property type="evidence" value="ECO:0007669"/>
    <property type="project" value="UniProtKB-UniRule"/>
</dbReference>
<dbReference type="GO" id="GO:0005524">
    <property type="term" value="F:ATP binding"/>
    <property type="evidence" value="ECO:0007669"/>
    <property type="project" value="UniProtKB-UniRule"/>
</dbReference>
<dbReference type="GO" id="GO:0046872">
    <property type="term" value="F:metal ion binding"/>
    <property type="evidence" value="ECO:0007669"/>
    <property type="project" value="UniProtKB-KW"/>
</dbReference>
<dbReference type="GO" id="GO:0016730">
    <property type="term" value="F:oxidoreductase activity, acting on iron-sulfur proteins as donors"/>
    <property type="evidence" value="ECO:0007669"/>
    <property type="project" value="InterPro"/>
</dbReference>
<dbReference type="GO" id="GO:0016636">
    <property type="term" value="F:oxidoreductase activity, acting on the CH-CH group of donors, iron-sulfur protein as acceptor"/>
    <property type="evidence" value="ECO:0007669"/>
    <property type="project" value="UniProtKB-UniRule"/>
</dbReference>
<dbReference type="GO" id="GO:0036070">
    <property type="term" value="P:light-independent bacteriochlorophyll biosynthetic process"/>
    <property type="evidence" value="ECO:0007669"/>
    <property type="project" value="UniProtKB-UniRule"/>
</dbReference>
<dbReference type="GO" id="GO:0019685">
    <property type="term" value="P:photosynthesis, dark reaction"/>
    <property type="evidence" value="ECO:0007669"/>
    <property type="project" value="InterPro"/>
</dbReference>
<dbReference type="Gene3D" id="3.40.50.1980">
    <property type="entry name" value="Nitrogenase molybdenum iron protein domain"/>
    <property type="match status" value="3"/>
</dbReference>
<dbReference type="HAMAP" id="MF_00352">
    <property type="entry name" value="ChlN_BchN"/>
    <property type="match status" value="1"/>
</dbReference>
<dbReference type="InterPro" id="IPR050293">
    <property type="entry name" value="LIPOR_BchN/ChlN"/>
</dbReference>
<dbReference type="InterPro" id="IPR000510">
    <property type="entry name" value="Nase/OxRdtase_comp1"/>
</dbReference>
<dbReference type="InterPro" id="IPR005970">
    <property type="entry name" value="Protochl_reductN"/>
</dbReference>
<dbReference type="NCBIfam" id="TIGR01279">
    <property type="entry name" value="DPOR_bchN"/>
    <property type="match status" value="1"/>
</dbReference>
<dbReference type="NCBIfam" id="NF002768">
    <property type="entry name" value="PRK02842.1"/>
    <property type="match status" value="1"/>
</dbReference>
<dbReference type="PANTHER" id="PTHR39429">
    <property type="entry name" value="LIGHT-INDEPENDENT PROTOCHLOROPHYLLIDE REDUCTASE SUBUNIT N"/>
    <property type="match status" value="1"/>
</dbReference>
<dbReference type="PANTHER" id="PTHR39429:SF3">
    <property type="entry name" value="LIGHT-INDEPENDENT PROTOCHLOROPHYLLIDE REDUCTASE SUBUNIT N"/>
    <property type="match status" value="1"/>
</dbReference>
<dbReference type="Pfam" id="PF00148">
    <property type="entry name" value="Oxidored_nitro"/>
    <property type="match status" value="1"/>
</dbReference>
<dbReference type="PIRSF" id="PIRSF000162">
    <property type="entry name" value="P_chlorophyll_rd"/>
    <property type="match status" value="1"/>
</dbReference>
<dbReference type="SUPFAM" id="SSF53807">
    <property type="entry name" value="Helical backbone' metal receptor"/>
    <property type="match status" value="1"/>
</dbReference>
<protein>
    <recommendedName>
        <fullName evidence="1">Light-independent protochlorophyllide reductase subunit N</fullName>
        <shortName evidence="1">DPOR subunit N</shortName>
        <shortName evidence="1">LI-POR subunit N</shortName>
        <ecNumber evidence="1">1.3.7.7</ecNumber>
    </recommendedName>
</protein>
<keyword id="KW-0004">4Fe-4S</keyword>
<keyword id="KW-0067">ATP-binding</keyword>
<keyword id="KW-0077">Bacteriochlorophyll biosynthesis</keyword>
<keyword id="KW-0149">Chlorophyll biosynthesis</keyword>
<keyword id="KW-0408">Iron</keyword>
<keyword id="KW-0411">Iron-sulfur</keyword>
<keyword id="KW-0479">Metal-binding</keyword>
<keyword id="KW-0547">Nucleotide-binding</keyword>
<keyword id="KW-0560">Oxidoreductase</keyword>
<keyword id="KW-0602">Photosynthesis</keyword>
<keyword id="KW-1185">Reference proteome</keyword>
<name>BCHN_CHLL3</name>
<accession>Q3B6C8</accession>
<sequence length="420" mass="46688">MLQVPGDVQILKEDNVTHSFCGLASVGWMYQKIRDSFFLILGTHTCAHFLQNALGMMIFAKPRFGIALIEEGDLSKNEPTLDEVIAEIKADHNPSVIFLLSSCTPEVMKVDFKGLADHLSTQQTPVLFVPASGLVYNFTQAEDSVLHALVPYCPVAPAGEKSVVFLGSVNDATADDLRAEAEELGIKVGGFLPESRFDRMPAIGPDTILAPIQPYLSRVAVKLERERGSRTLHSLFPFGPDGTRVFWEDLAREFGIEVDLRDREKAAWEKISRQTAMLKGKKVFLTADTMMELPLGRFLRSAGAEVVECSSAYINKKFLAKELKALEGVRVVEQPNFHRQLEDIKRLRPDLVVTSLMTANPFVGHGFIVKWSMEFMLMPIHGWSGVITLANLFVSPLDRRSKLPAFDKAVWLEGVMPAAE</sequence>
<reference key="1">
    <citation type="submission" date="2005-08" db="EMBL/GenBank/DDBJ databases">
        <title>Complete sequence of Pelodictyon luteolum DSM 273.</title>
        <authorList>
            <consortium name="US DOE Joint Genome Institute"/>
            <person name="Copeland A."/>
            <person name="Lucas S."/>
            <person name="Lapidus A."/>
            <person name="Barry K."/>
            <person name="Detter J.C."/>
            <person name="Glavina T."/>
            <person name="Hammon N."/>
            <person name="Israni S."/>
            <person name="Pitluck S."/>
            <person name="Bryant D."/>
            <person name="Schmutz J."/>
            <person name="Larimer F."/>
            <person name="Land M."/>
            <person name="Kyrpides N."/>
            <person name="Ivanova N."/>
            <person name="Richardson P."/>
        </authorList>
    </citation>
    <scope>NUCLEOTIDE SEQUENCE [LARGE SCALE GENOMIC DNA]</scope>
    <source>
        <strain>DSM 273 / BCRC 81028 / 2530</strain>
    </source>
</reference>
<gene>
    <name evidence="1" type="primary">bchN</name>
    <name type="ordered locus">Plut_0215</name>
</gene>
<organism>
    <name type="scientific">Chlorobium luteolum (strain DSM 273 / BCRC 81028 / 2530)</name>
    <name type="common">Pelodictyon luteolum</name>
    <dbReference type="NCBI Taxonomy" id="319225"/>
    <lineage>
        <taxon>Bacteria</taxon>
        <taxon>Pseudomonadati</taxon>
        <taxon>Chlorobiota</taxon>
        <taxon>Chlorobiia</taxon>
        <taxon>Chlorobiales</taxon>
        <taxon>Chlorobiaceae</taxon>
        <taxon>Chlorobium/Pelodictyon group</taxon>
        <taxon>Pelodictyon</taxon>
    </lineage>
</organism>
<proteinExistence type="inferred from homology"/>
<comment type="function">
    <text evidence="1">Component of the dark-operative protochlorophyllide reductase (DPOR) that uses Mg-ATP and reduced ferredoxin to reduce ring D of protochlorophyllide (Pchlide) to form chlorophyllide a (Chlide). This reaction is light-independent. The NB-protein (BchN-BchB) is the catalytic component of the complex.</text>
</comment>
<comment type="catalytic activity">
    <reaction evidence="1">
        <text>chlorophyllide a + oxidized 2[4Fe-4S]-[ferredoxin] + 2 ADP + 2 phosphate = protochlorophyllide a + reduced 2[4Fe-4S]-[ferredoxin] + 2 ATP + 2 H2O</text>
        <dbReference type="Rhea" id="RHEA:28202"/>
        <dbReference type="Rhea" id="RHEA-COMP:10002"/>
        <dbReference type="Rhea" id="RHEA-COMP:10004"/>
        <dbReference type="ChEBI" id="CHEBI:15377"/>
        <dbReference type="ChEBI" id="CHEBI:30616"/>
        <dbReference type="ChEBI" id="CHEBI:33722"/>
        <dbReference type="ChEBI" id="CHEBI:33723"/>
        <dbReference type="ChEBI" id="CHEBI:43474"/>
        <dbReference type="ChEBI" id="CHEBI:83348"/>
        <dbReference type="ChEBI" id="CHEBI:83350"/>
        <dbReference type="ChEBI" id="CHEBI:456216"/>
        <dbReference type="EC" id="1.3.7.7"/>
    </reaction>
</comment>
<comment type="cofactor">
    <cofactor evidence="1">
        <name>[4Fe-4S] cluster</name>
        <dbReference type="ChEBI" id="CHEBI:49883"/>
    </cofactor>
    <text evidence="1">Binds 1 [4Fe-4S] cluster per heterodimer. The cluster is bound at the heterodimer interface by residues from both subunits.</text>
</comment>
<comment type="pathway">
    <text evidence="1">Porphyrin-containing compound metabolism; bacteriochlorophyll biosynthesis (light-independent).</text>
</comment>
<comment type="subunit">
    <text evidence="1">Protochlorophyllide reductase is composed of three subunits; BchL, BchN and BchB. Forms a heterotetramer of two BchB and two BchN subunits.</text>
</comment>
<comment type="similarity">
    <text evidence="1">Belongs to the BchN/ChlN family.</text>
</comment>
<feature type="chain" id="PRO_0000324007" description="Light-independent protochlorophyllide reductase subunit N">
    <location>
        <begin position="1"/>
        <end position="420"/>
    </location>
</feature>
<feature type="binding site" evidence="1">
    <location>
        <position position="21"/>
    </location>
    <ligand>
        <name>[4Fe-4S] cluster</name>
        <dbReference type="ChEBI" id="CHEBI:49883"/>
        <note>ligand shared with heterodimeric partner</note>
    </ligand>
</feature>
<feature type="binding site" evidence="1">
    <location>
        <position position="46"/>
    </location>
    <ligand>
        <name>[4Fe-4S] cluster</name>
        <dbReference type="ChEBI" id="CHEBI:49883"/>
        <note>ligand shared with heterodimeric partner</note>
    </ligand>
</feature>
<feature type="binding site" evidence="1">
    <location>
        <position position="103"/>
    </location>
    <ligand>
        <name>[4Fe-4S] cluster</name>
        <dbReference type="ChEBI" id="CHEBI:49883"/>
        <note>ligand shared with heterodimeric partner</note>
    </ligand>
</feature>